<organism>
    <name type="scientific">Porphyromonas endodontalis (strain ATCC 35406 / DSM 24491 / JCM 8526 / CCUG 16442 / BCRC 14492 / NCTC 13058 / HG 370)</name>
    <name type="common">Bacteroides endodontalis</name>
    <dbReference type="NCBI Taxonomy" id="553175"/>
    <lineage>
        <taxon>Bacteria</taxon>
        <taxon>Pseudomonadati</taxon>
        <taxon>Bacteroidota</taxon>
        <taxon>Bacteroidia</taxon>
        <taxon>Bacteroidales</taxon>
        <taxon>Porphyromonadaceae</taxon>
        <taxon>Porphyromonas</taxon>
    </lineage>
</organism>
<sequence>MKRTILSLLAAVSLAIPVYAAGYSDGNPTQQTSQSSMMTPEMLLTMARIGGFSLSPNGKQVVYSVSLPSIQDNKAKTQLFFVNSDGSGRKALTDGTRTAVSPRWIEDGKRIAYLTVIEGEMQLVSILPDGTDQRQVTRIPGGITGYLYSQDGKQLVYTADIKLPNEAKDRNPDLDKISGRVITDLMYKHWDEWVETAPHTFVASLAQQPITQGKDLLEGELFEAPMKPHSDESDIAITPDGKGIAYASRKKTGLEYSISTNSDIYYYDLTTGTTTNLTEGMMGYDTHPSFSPDGKYMTWCSMERDGYESDLIRLFLLDRTTGEKTYLTEGFEYNVEQPTWSQDGKSIYFIACVEAESHLYELTLKNKKIRRITQGQMDYVGFDLQGTTLVAARQSMLAPTDLYRIDLKKGTATAITKENESTLAQLGDIRCEKRWMNTTNGEKMLVWVLYPANFDASKKYPSILYCQGGPQSTISQFWSYRWNPRIMAENGYIVILPNRHGVPGFGKAWNEQISGDYGGQNMRDYLTAADEMKKESYIDPNGMGCVGASYGGFSVYWLAGHHEKRFNCFIAHAGIFNLEAQYLETEEKWFANWDMGGAPWEKSNATAQRTFATSPHLFVDKWDTPILIIHGERDYRILASQGMMAFDAARMHGVPTEMLLYPDENHWVLQPQNAVLWQRTFFRWLDRWLKK</sequence>
<feature type="signal peptide" evidence="2">
    <location>
        <begin position="1"/>
        <end position="20"/>
    </location>
</feature>
<feature type="chain" id="PRO_5002927988" description="Dipeptidyl-peptidase 5">
    <location>
        <begin position="21"/>
        <end position="691"/>
    </location>
</feature>
<feature type="active site" description="Charge relay system" evidence="1">
    <location>
        <position position="549"/>
    </location>
</feature>
<feature type="active site" description="Charge relay system" evidence="1">
    <location>
        <position position="634"/>
    </location>
</feature>
<feature type="active site" description="Charge relay system" evidence="1">
    <location>
        <position position="666"/>
    </location>
</feature>
<reference key="1">
    <citation type="submission" date="2009-04" db="EMBL/GenBank/DDBJ databases">
        <authorList>
            <person name="Sebastian Y."/>
            <person name="Madupu R."/>
            <person name="Durkin A.S."/>
            <person name="Torralba M."/>
            <person name="Methe B."/>
            <person name="Sutton G.G."/>
            <person name="Strausberg R.L."/>
            <person name="Nelson K.E."/>
        </authorList>
    </citation>
    <scope>NUCLEOTIDE SEQUENCE [LARGE SCALE GENOMIC DNA]</scope>
    <source>
        <strain>ATCC 35406 / DSM 24491 / JCM 8526 / CCUG 16442 / BCRC 14492 / NCTC 13058 / HG 370</strain>
    </source>
</reference>
<reference key="2">
    <citation type="journal article" date="2014" name="PLoS ONE">
        <title>Identification of dipeptidyl-peptidase (DPP)5 and DPP7 in Porphyromonas endodontalis, distinct from those in Porphyromonas gingivalis.</title>
        <authorList>
            <person name="Nishimata H."/>
            <person name="Ohara-Nemoto Y."/>
            <person name="Baba T.T."/>
            <person name="Hoshino T."/>
            <person name="Fujiwara T."/>
            <person name="Shimoyama Y."/>
            <person name="Kimura S."/>
            <person name="Nemoto T.K."/>
        </authorList>
    </citation>
    <scope>IDENTIFICATION</scope>
    <scope>FUNCTION</scope>
    <scope>CATALYTIC ACTIVITY</scope>
    <scope>SUBSTRATE SPECIFICITY</scope>
    <scope>BIOPHYSICOCHEMICAL PROPERTIES</scope>
    <source>
        <strain>ATCC 35406 / DSM 24491 / JCM 8526 / CCUG 16442 / BCRC 14492 / NCTC 13058 / HG 370</strain>
    </source>
</reference>
<gene>
    <name evidence="4" type="primary">dpp5</name>
    <name evidence="6" type="ORF">POREN0001_0643</name>
</gene>
<comment type="function">
    <text evidence="3">Catalyzes the removal of dipeptides from the N-terminus of oligopeptides. Prefers Ala and hydrophobic residues at the P1 position, and has no preference for P2 residues. Shows the highest dipeptidyl peptidase activity toward the synthetic substrate Lys-Ala-methylcoumaryl-7-amide (Lys-Ala-MCA). Is likely involved in amino acid metabolism and bacterial growth/survival of asaccharolytic P.endodontalis, that utilizes amino acids from extracellular proteinaceous nutrients as energy and carbon sources.</text>
</comment>
<comment type="biophysicochemical properties">
    <kinetics>
        <KM evidence="3">110 uM for Lys-Ala-MCA (at 37 degrees Celsius and pH 7.0)</KM>
        <KM evidence="3">196 uM for Met-Leu-MCA (at 37 degrees Celsius and pH 7.0)</KM>
        <KM evidence="3">257 uM for Ser-Tyr-MCA (at 37 degrees Celsius and pH 7.0)</KM>
        <KM evidence="3">993 uM for Gly-Phe-MCA (at 37 degrees Celsius and pH 7.0)</KM>
        <text evidence="3">kcat is 21213 sec(-1) with Lys-Ala-MCA as substrate. kcat is 5175 sec(-1) with Met-Leu-MCA as substrate. kcat is 3468 sec(-1) with Ser-Tyr-MCA as substrate. kcat is 10378 sec(-1) with Gly-Phe-MCA as substrate.</text>
    </kinetics>
    <phDependence>
        <text evidence="3">Optimum pH is 6.7, using Lys-Ala-MCA as substrate.</text>
    </phDependence>
</comment>
<comment type="subunit">
    <text evidence="1">Homodimer.</text>
</comment>
<comment type="subcellular location">
    <subcellularLocation>
        <location evidence="1">Periplasm</location>
    </subcellularLocation>
</comment>
<comment type="similarity">
    <text evidence="5">Belongs to the peptidase S9C family.</text>
</comment>
<protein>
    <recommendedName>
        <fullName evidence="4">Dipeptidyl-peptidase 5</fullName>
        <shortName evidence="4">DPP5</shortName>
        <ecNumber evidence="3">3.4.14.-</ecNumber>
    </recommendedName>
    <alternativeName>
        <fullName evidence="4">MER236725</fullName>
    </alternativeName>
</protein>
<keyword id="KW-0031">Aminopeptidase</keyword>
<keyword id="KW-0378">Hydrolase</keyword>
<keyword id="KW-0574">Periplasm</keyword>
<keyword id="KW-0645">Protease</keyword>
<keyword id="KW-1185">Reference proteome</keyword>
<keyword id="KW-0720">Serine protease</keyword>
<keyword id="KW-0732">Signal</keyword>
<name>DPP5_POREA</name>
<evidence type="ECO:0000250" key="1">
    <source>
        <dbReference type="UniProtKB" id="B2RIT0"/>
    </source>
</evidence>
<evidence type="ECO:0000255" key="2"/>
<evidence type="ECO:0000269" key="3">
    <source>
    </source>
</evidence>
<evidence type="ECO:0000303" key="4">
    <source>
    </source>
</evidence>
<evidence type="ECO:0000305" key="5"/>
<evidence type="ECO:0000312" key="6">
    <source>
        <dbReference type="EMBL" id="EEN83452.1"/>
    </source>
</evidence>
<dbReference type="EC" id="3.4.14.-" evidence="3"/>
<dbReference type="EMBL" id="ACNN01000007">
    <property type="protein sequence ID" value="EEN83452.1"/>
    <property type="molecule type" value="Genomic_DNA"/>
</dbReference>
<dbReference type="RefSeq" id="WP_004332553.1">
    <property type="nucleotide sequence ID" value="NZ_ACNN01000007.1"/>
</dbReference>
<dbReference type="SMR" id="C3J8X2"/>
<dbReference type="STRING" id="553175.POREN0001_0643"/>
<dbReference type="ESTHER" id="porea-dpp5">
    <property type="family name" value="Prolyl_oligopeptidase_S9"/>
</dbReference>
<dbReference type="MEROPS" id="S09.075"/>
<dbReference type="GeneID" id="93364910"/>
<dbReference type="eggNOG" id="COG0823">
    <property type="taxonomic scope" value="Bacteria"/>
</dbReference>
<dbReference type="eggNOG" id="COG1506">
    <property type="taxonomic scope" value="Bacteria"/>
</dbReference>
<dbReference type="Proteomes" id="UP000004295">
    <property type="component" value="Unassembled WGS sequence"/>
</dbReference>
<dbReference type="GO" id="GO:0042597">
    <property type="term" value="C:periplasmic space"/>
    <property type="evidence" value="ECO:0007669"/>
    <property type="project" value="UniProtKB-SubCell"/>
</dbReference>
<dbReference type="GO" id="GO:0004177">
    <property type="term" value="F:aminopeptidase activity"/>
    <property type="evidence" value="ECO:0007669"/>
    <property type="project" value="UniProtKB-KW"/>
</dbReference>
<dbReference type="GO" id="GO:0008239">
    <property type="term" value="F:dipeptidyl-peptidase activity"/>
    <property type="evidence" value="ECO:0000314"/>
    <property type="project" value="UniProtKB"/>
</dbReference>
<dbReference type="GO" id="GO:0042277">
    <property type="term" value="F:peptide binding"/>
    <property type="evidence" value="ECO:0000314"/>
    <property type="project" value="UniProtKB"/>
</dbReference>
<dbReference type="GO" id="GO:0004252">
    <property type="term" value="F:serine-type endopeptidase activity"/>
    <property type="evidence" value="ECO:0007669"/>
    <property type="project" value="TreeGrafter"/>
</dbReference>
<dbReference type="GO" id="GO:0043171">
    <property type="term" value="P:peptide catabolic process"/>
    <property type="evidence" value="ECO:0000314"/>
    <property type="project" value="UniProtKB"/>
</dbReference>
<dbReference type="GO" id="GO:0006508">
    <property type="term" value="P:proteolysis"/>
    <property type="evidence" value="ECO:0007669"/>
    <property type="project" value="UniProtKB-KW"/>
</dbReference>
<dbReference type="FunFam" id="2.120.10.30:FF:000079">
    <property type="entry name" value="S9 family peptidase"/>
    <property type="match status" value="1"/>
</dbReference>
<dbReference type="FunFam" id="3.40.50.1820:FF:000028">
    <property type="entry name" value="S9 family peptidase"/>
    <property type="match status" value="1"/>
</dbReference>
<dbReference type="Gene3D" id="3.40.50.1820">
    <property type="entry name" value="alpha/beta hydrolase"/>
    <property type="match status" value="1"/>
</dbReference>
<dbReference type="Gene3D" id="2.120.10.30">
    <property type="entry name" value="TolB, C-terminal domain"/>
    <property type="match status" value="2"/>
</dbReference>
<dbReference type="InterPro" id="IPR011042">
    <property type="entry name" value="6-blade_b-propeller_TolB-like"/>
</dbReference>
<dbReference type="InterPro" id="IPR029058">
    <property type="entry name" value="AB_hydrolase_fold"/>
</dbReference>
<dbReference type="InterPro" id="IPR001375">
    <property type="entry name" value="Peptidase_S9_cat"/>
</dbReference>
<dbReference type="InterPro" id="IPR002469">
    <property type="entry name" value="Peptidase_S9B_N"/>
</dbReference>
<dbReference type="PANTHER" id="PTHR42776:SF13">
    <property type="entry name" value="DIPEPTIDYL-PEPTIDASE 5"/>
    <property type="match status" value="1"/>
</dbReference>
<dbReference type="PANTHER" id="PTHR42776">
    <property type="entry name" value="SERINE PEPTIDASE S9 FAMILY MEMBER"/>
    <property type="match status" value="1"/>
</dbReference>
<dbReference type="Pfam" id="PF00930">
    <property type="entry name" value="DPPIV_N"/>
    <property type="match status" value="1"/>
</dbReference>
<dbReference type="Pfam" id="PF00326">
    <property type="entry name" value="Peptidase_S9"/>
    <property type="match status" value="1"/>
</dbReference>
<dbReference type="SUPFAM" id="SSF53474">
    <property type="entry name" value="alpha/beta-Hydrolases"/>
    <property type="match status" value="1"/>
</dbReference>
<dbReference type="SUPFAM" id="SSF82171">
    <property type="entry name" value="DPP6 N-terminal domain-like"/>
    <property type="match status" value="1"/>
</dbReference>
<accession>C3J8X2</accession>
<proteinExistence type="evidence at protein level"/>